<proteinExistence type="inferred from homology"/>
<dbReference type="EMBL" id="U75930">
    <property type="protein sequence ID" value="AAC59020.2"/>
    <property type="molecule type" value="Genomic_DNA"/>
</dbReference>
<dbReference type="PIR" id="T10290">
    <property type="entry name" value="T10290"/>
</dbReference>
<dbReference type="RefSeq" id="NP_046177.2">
    <property type="nucleotide sequence ID" value="NC_001875.2"/>
</dbReference>
<dbReference type="SMR" id="O10282"/>
<dbReference type="KEGG" id="vg:911987"/>
<dbReference type="OrthoDB" id="2143at10239"/>
<dbReference type="Proteomes" id="UP000009248">
    <property type="component" value="Genome"/>
</dbReference>
<dbReference type="InterPro" id="IPR022048">
    <property type="entry name" value="Envelope_fusion-like"/>
</dbReference>
<dbReference type="Pfam" id="PF12259">
    <property type="entry name" value="Baculo_F"/>
    <property type="match status" value="1"/>
</dbReference>
<feature type="signal peptide" evidence="1">
    <location>
        <begin position="1"/>
        <end position="17"/>
    </location>
</feature>
<feature type="chain" id="PRO_0000036750" description="Uncharacterized 73.1 kDa protein">
    <location>
        <begin position="18"/>
        <end position="657"/>
    </location>
</feature>
<evidence type="ECO:0000255" key="1"/>
<accession>O10282</accession>
<reference key="1">
    <citation type="journal article" date="1997" name="Virology">
        <title>The sequence of the Orgyia pseudotsugata multinucleocapsid nuclear polyhedrosis virus genome.</title>
        <authorList>
            <person name="Ahrens C.H."/>
            <person name="Russell R.R."/>
            <person name="Funk C.J."/>
            <person name="Evans J."/>
            <person name="Harwood S."/>
            <person name="Rohrmann G.F."/>
        </authorList>
    </citation>
    <scope>NUCLEOTIDE SEQUENCE [LARGE SCALE GENOMIC DNA]</scope>
</reference>
<reference key="2">
    <citation type="submission" date="2000-10" db="EMBL/GenBank/DDBJ databases">
        <authorList>
            <person name="Rohrmann G.F."/>
        </authorList>
    </citation>
    <scope>SEQUENCE REVISION TO C-TERMINUS</scope>
</reference>
<gene>
    <name type="ORF">ORF21</name>
</gene>
<keyword id="KW-1185">Reference proteome</keyword>
<keyword id="KW-0732">Signal</keyword>
<protein>
    <recommendedName>
        <fullName>Uncharacterized 73.1 kDa protein</fullName>
    </recommendedName>
    <alternativeName>
        <fullName>ORF21</fullName>
    </alternativeName>
</protein>
<organismHost>
    <name type="scientific">Orgyia pseudotsugata</name>
    <name type="common">Douglas-fir tussock moth</name>
    <dbReference type="NCBI Taxonomy" id="33414"/>
</organismHost>
<sequence>MACVLACVAVLIGAASATASIDFTPIDDGAGLVFERIGALRHVTNQRFLFVQTIDYYPLLQELAKISKFVREPRNNASSCPLVKLVRPGKPRATGGRISKHLASLTQINKEFVSYTLNSADPQNNEVFTDVLEVDYEDTRQQDAAFADAHNPPHWSVVSAADVKELLAVAPPRDRVRVLPHISTANVADKYLKYEACINEERSADNECLYLTEMHGVMASKLADAASFANTLDRLIKQTRRNKLNMTNNVIDDELLLREMRQLSKLLAGHGLGWVVDFERELNAQFDLSQAYKLHLYASQNTVVLCVAMPLVDTAALQYSLYKVATVPFCRGTMCLMMVPAADYIAVTDTRNFYTQVPADFQTQCKAFAGYDEFLCPASQRVPTLDSGECEIEMFMGRYARDIDVQCDMRVADNRPSQVLLGPLVNCRKWVYSFSSNATVSYWCGARDAATVAVPAGVGVVVAQSPLTCSVRVNKDALLFTVDTRSHKAASRAYWPRRRFNYNDYVNTSLLLQTTTSFADTVTDLSAQQLKTLRSRFHIRDYATPRHTFFAPRRSDAAAPDPPHEKPTMLVYVLLGVGVLSALCVVGAYCAFRRYCKQRRSSVVVSFKNDDSQPMVAISNGARAGVHINVPHNNSAPKYEKAFLFPMEIKRTNNKLA</sequence>
<name>Y023_NPVOP</name>
<organism>
    <name type="scientific">Orgyia pseudotsugata multicapsid polyhedrosis virus</name>
    <name type="common">OpMNPV</name>
    <dbReference type="NCBI Taxonomy" id="262177"/>
    <lineage>
        <taxon>Viruses</taxon>
        <taxon>Viruses incertae sedis</taxon>
        <taxon>Naldaviricetes</taxon>
        <taxon>Lefavirales</taxon>
        <taxon>Baculoviridae</taxon>
        <taxon>Alphabaculovirus</taxon>
        <taxon>Alphabaculovirus orpseudotsugatae</taxon>
    </lineage>
</organism>